<sequence>MQKFLTTAPVVAAIWFTLTAGILIEWNRFFPDLLFHPM</sequence>
<protein>
    <recommendedName>
        <fullName evidence="1">Photosystem I reaction center subunit IX</fullName>
    </recommendedName>
</protein>
<comment type="function">
    <text evidence="1">May help in the organization of the PsaE and PsaF subunits.</text>
</comment>
<comment type="subcellular location">
    <subcellularLocation>
        <location evidence="1">Cellular thylakoid membrane</location>
        <topology evidence="1">Single-pass membrane protein</topology>
    </subcellularLocation>
</comment>
<comment type="similarity">
    <text evidence="1">Belongs to the PsaJ family.</text>
</comment>
<organism>
    <name type="scientific">Parasynechococcus marenigrum (strain WH8102)</name>
    <dbReference type="NCBI Taxonomy" id="84588"/>
    <lineage>
        <taxon>Bacteria</taxon>
        <taxon>Bacillati</taxon>
        <taxon>Cyanobacteriota</taxon>
        <taxon>Cyanophyceae</taxon>
        <taxon>Synechococcales</taxon>
        <taxon>Prochlorococcaceae</taxon>
        <taxon>Parasynechococcus</taxon>
        <taxon>Parasynechococcus marenigrum</taxon>
    </lineage>
</organism>
<evidence type="ECO:0000255" key="1">
    <source>
        <dbReference type="HAMAP-Rule" id="MF_00522"/>
    </source>
</evidence>
<proteinExistence type="inferred from homology"/>
<name>PSAJ_PARMW</name>
<gene>
    <name evidence="1" type="primary">psaJ</name>
    <name type="ordered locus">SYNW1836</name>
</gene>
<dbReference type="EMBL" id="BX569694">
    <property type="protein sequence ID" value="CAE08351.1"/>
    <property type="molecule type" value="Genomic_DNA"/>
</dbReference>
<dbReference type="RefSeq" id="WP_007098612.1">
    <property type="nucleotide sequence ID" value="NC_005070.1"/>
</dbReference>
<dbReference type="SMR" id="Q7U571"/>
<dbReference type="STRING" id="84588.SYNW1836"/>
<dbReference type="KEGG" id="syw:SYNW1836"/>
<dbReference type="eggNOG" id="ENOG5033A5A">
    <property type="taxonomic scope" value="Bacteria"/>
</dbReference>
<dbReference type="HOGENOM" id="CLU_212133_1_1_3"/>
<dbReference type="Proteomes" id="UP000001422">
    <property type="component" value="Chromosome"/>
</dbReference>
<dbReference type="GO" id="GO:0009522">
    <property type="term" value="C:photosystem I"/>
    <property type="evidence" value="ECO:0007669"/>
    <property type="project" value="UniProtKB-KW"/>
</dbReference>
<dbReference type="GO" id="GO:0031676">
    <property type="term" value="C:plasma membrane-derived thylakoid membrane"/>
    <property type="evidence" value="ECO:0007669"/>
    <property type="project" value="UniProtKB-SubCell"/>
</dbReference>
<dbReference type="GO" id="GO:0015979">
    <property type="term" value="P:photosynthesis"/>
    <property type="evidence" value="ECO:0007669"/>
    <property type="project" value="UniProtKB-UniRule"/>
</dbReference>
<dbReference type="Gene3D" id="1.20.5.510">
    <property type="entry name" value="Single helix bin"/>
    <property type="match status" value="1"/>
</dbReference>
<dbReference type="HAMAP" id="MF_00522">
    <property type="entry name" value="PSI_PsaJ"/>
    <property type="match status" value="1"/>
</dbReference>
<dbReference type="InterPro" id="IPR002615">
    <property type="entry name" value="PSI_PsaJ"/>
</dbReference>
<dbReference type="InterPro" id="IPR036062">
    <property type="entry name" value="PSI_PsaJ_sf"/>
</dbReference>
<dbReference type="NCBIfam" id="NF002743">
    <property type="entry name" value="PRK02733.1"/>
    <property type="match status" value="1"/>
</dbReference>
<dbReference type="PANTHER" id="PTHR36082">
    <property type="match status" value="1"/>
</dbReference>
<dbReference type="PANTHER" id="PTHR36082:SF2">
    <property type="entry name" value="PHOTOSYSTEM I REACTION CENTER SUBUNIT IX"/>
    <property type="match status" value="1"/>
</dbReference>
<dbReference type="Pfam" id="PF01701">
    <property type="entry name" value="PSI_PsaJ"/>
    <property type="match status" value="1"/>
</dbReference>
<dbReference type="SUPFAM" id="SSF81544">
    <property type="entry name" value="Subunit IX of photosystem I reaction centre, PsaJ"/>
    <property type="match status" value="1"/>
</dbReference>
<keyword id="KW-0472">Membrane</keyword>
<keyword id="KW-0602">Photosynthesis</keyword>
<keyword id="KW-0603">Photosystem I</keyword>
<keyword id="KW-0793">Thylakoid</keyword>
<keyword id="KW-0812">Transmembrane</keyword>
<keyword id="KW-1133">Transmembrane helix</keyword>
<accession>Q7U571</accession>
<feature type="chain" id="PRO_0000207826" description="Photosystem I reaction center subunit IX">
    <location>
        <begin position="1"/>
        <end position="38"/>
    </location>
</feature>
<feature type="transmembrane region" description="Helical" evidence="1">
    <location>
        <begin position="4"/>
        <end position="24"/>
    </location>
</feature>
<reference key="1">
    <citation type="journal article" date="2003" name="Nature">
        <title>The genome of a motile marine Synechococcus.</title>
        <authorList>
            <person name="Palenik B."/>
            <person name="Brahamsha B."/>
            <person name="Larimer F.W."/>
            <person name="Land M.L."/>
            <person name="Hauser L."/>
            <person name="Chain P."/>
            <person name="Lamerdin J.E."/>
            <person name="Regala W."/>
            <person name="Allen E.E."/>
            <person name="McCarren J."/>
            <person name="Paulsen I.T."/>
            <person name="Dufresne A."/>
            <person name="Partensky F."/>
            <person name="Webb E.A."/>
            <person name="Waterbury J."/>
        </authorList>
    </citation>
    <scope>NUCLEOTIDE SEQUENCE [LARGE SCALE GENOMIC DNA]</scope>
    <source>
        <strain>WH8102</strain>
    </source>
</reference>